<reference evidence="8" key="1">
    <citation type="journal article" date="2019" name="Nat. Ecol. Evol.">
        <title>Palaeoproteomics resolves sloth relationships.</title>
        <authorList>
            <person name="Presslee S."/>
            <person name="Slater G.J."/>
            <person name="Pujos F."/>
            <person name="Forasiepi A.M."/>
            <person name="Fischer R."/>
            <person name="Molloy K."/>
            <person name="Mackie M."/>
            <person name="Olsen J.V."/>
            <person name="Kramarz A."/>
            <person name="Taglioretti M."/>
            <person name="Scaglia F."/>
            <person name="Lezcano M."/>
            <person name="Lanata J.L."/>
            <person name="Southon J."/>
            <person name="Feranec R."/>
            <person name="Bloch J."/>
            <person name="Hajduk A."/>
            <person name="Martin F.M."/>
            <person name="Salas Gismondi R."/>
            <person name="Reguero M."/>
            <person name="de Muizon C."/>
            <person name="Greenwood A."/>
            <person name="Chait B.T."/>
            <person name="Penkman K."/>
            <person name="Collins M."/>
            <person name="MacPhee R.D.E."/>
        </authorList>
    </citation>
    <scope>PROTEIN SEQUENCE</scope>
    <scope>TISSUE SPECIFICITY</scope>
    <scope>IDENTIFICATION BY MASS SPECTROMETRY</scope>
    <source>
        <tissue evidence="7">Bone</tissue>
    </source>
</reference>
<proteinExistence type="evidence at protein level"/>
<organism evidence="7">
    <name type="scientific">Scelidotherium sp. (strain SLP-2019)</name>
    <name type="common">South American ground sloth</name>
    <dbReference type="NCBI Taxonomy" id="2546665"/>
    <lineage>
        <taxon>Eukaryota</taxon>
        <taxon>Metazoa</taxon>
        <taxon>Chordata</taxon>
        <taxon>Craniata</taxon>
        <taxon>Vertebrata</taxon>
        <taxon>Euteleostomi</taxon>
        <taxon>Mammalia</taxon>
        <taxon>Eutheria</taxon>
        <taxon>Xenarthra</taxon>
        <taxon>Pilosa</taxon>
        <taxon>Folivora</taxon>
        <taxon>Mylodontidae</taxon>
        <taxon>Scelidotherium</taxon>
    </lineage>
</organism>
<keyword id="KW-0903">Direct protein sequencing</keyword>
<keyword id="KW-0952">Extinct organism protein</keyword>
<keyword id="KW-0272">Extracellular matrix</keyword>
<keyword id="KW-0325">Glycoprotein</keyword>
<keyword id="KW-0379">Hydroxylation</keyword>
<keyword id="KW-0597">Phosphoprotein</keyword>
<keyword id="KW-0964">Secreted</keyword>
<name>CO1A1_SCESX</name>
<protein>
    <recommendedName>
        <fullName evidence="7">Collagen alpha-1(I) chain</fullName>
    </recommendedName>
    <alternativeName>
        <fullName evidence="1">Alpha-1 type I collagen</fullName>
    </alternativeName>
</protein>
<dbReference type="GO" id="GO:0005576">
    <property type="term" value="C:extracellular region"/>
    <property type="evidence" value="ECO:0007669"/>
    <property type="project" value="UniProtKB-SubCell"/>
</dbReference>
<dbReference type="InterPro" id="IPR008160">
    <property type="entry name" value="Collagen"/>
</dbReference>
<dbReference type="InterPro" id="IPR050938">
    <property type="entry name" value="Collagen_Structural_Proteins"/>
</dbReference>
<dbReference type="PANTHER" id="PTHR37456:SF6">
    <property type="entry name" value="COLLAGEN ALPHA-1(XXIII) CHAIN-LIKE ISOFORM X2"/>
    <property type="match status" value="1"/>
</dbReference>
<dbReference type="PANTHER" id="PTHR37456">
    <property type="entry name" value="SI:CH211-266K2.1"/>
    <property type="match status" value="1"/>
</dbReference>
<dbReference type="Pfam" id="PF01391">
    <property type="entry name" value="Collagen"/>
    <property type="match status" value="9"/>
</dbReference>
<feature type="chain" id="PRO_0000448460" description="Collagen alpha-1(I) chain">
    <location>
        <begin position="1"/>
        <end position="965"/>
    </location>
</feature>
<feature type="region of interest" description="Disordered" evidence="5">
    <location>
        <begin position="1"/>
        <end position="965"/>
    </location>
</feature>
<feature type="compositionally biased region" description="Pro residues" evidence="5">
    <location>
        <begin position="1"/>
        <end position="21"/>
    </location>
</feature>
<feature type="compositionally biased region" description="Basic and acidic residues" evidence="5">
    <location>
        <begin position="52"/>
        <end position="66"/>
    </location>
</feature>
<feature type="compositionally biased region" description="Low complexity" evidence="5">
    <location>
        <begin position="102"/>
        <end position="118"/>
    </location>
</feature>
<feature type="compositionally biased region" description="Low complexity" evidence="5">
    <location>
        <begin position="136"/>
        <end position="154"/>
    </location>
</feature>
<feature type="compositionally biased region" description="Pro residues" evidence="5">
    <location>
        <begin position="156"/>
        <end position="168"/>
    </location>
</feature>
<feature type="compositionally biased region" description="Low complexity" evidence="5">
    <location>
        <begin position="202"/>
        <end position="241"/>
    </location>
</feature>
<feature type="compositionally biased region" description="Gly residues" evidence="5">
    <location>
        <begin position="307"/>
        <end position="327"/>
    </location>
</feature>
<feature type="compositionally biased region" description="Low complexity" evidence="5">
    <location>
        <begin position="359"/>
        <end position="385"/>
    </location>
</feature>
<feature type="compositionally biased region" description="Low complexity" evidence="5">
    <location>
        <begin position="394"/>
        <end position="413"/>
    </location>
</feature>
<feature type="compositionally biased region" description="Low complexity" evidence="5">
    <location>
        <begin position="472"/>
        <end position="482"/>
    </location>
</feature>
<feature type="compositionally biased region" description="Low complexity" evidence="5">
    <location>
        <begin position="569"/>
        <end position="583"/>
    </location>
</feature>
<feature type="compositionally biased region" description="Low complexity" evidence="5">
    <location>
        <begin position="596"/>
        <end position="623"/>
    </location>
</feature>
<feature type="compositionally biased region" description="Pro residues" evidence="5">
    <location>
        <begin position="625"/>
        <end position="637"/>
    </location>
</feature>
<feature type="compositionally biased region" description="Low complexity" evidence="5">
    <location>
        <begin position="652"/>
        <end position="668"/>
    </location>
</feature>
<feature type="compositionally biased region" description="Low complexity" evidence="5">
    <location>
        <begin position="697"/>
        <end position="706"/>
    </location>
</feature>
<feature type="compositionally biased region" description="Low complexity" evidence="5">
    <location>
        <begin position="718"/>
        <end position="730"/>
    </location>
</feature>
<feature type="compositionally biased region" description="Pro residues" evidence="5">
    <location>
        <begin position="768"/>
        <end position="780"/>
    </location>
</feature>
<feature type="compositionally biased region" description="Pro residues" evidence="5">
    <location>
        <begin position="815"/>
        <end position="830"/>
    </location>
</feature>
<feature type="compositionally biased region" description="Low complexity" evidence="5">
    <location>
        <begin position="851"/>
        <end position="865"/>
    </location>
</feature>
<feature type="compositionally biased region" description="Basic and acidic residues" evidence="5">
    <location>
        <begin position="866"/>
        <end position="880"/>
    </location>
</feature>
<feature type="compositionally biased region" description="Low complexity" evidence="5">
    <location>
        <begin position="899"/>
        <end position="932"/>
    </location>
</feature>
<feature type="compositionally biased region" description="Pro residues" evidence="5">
    <location>
        <begin position="950"/>
        <end position="965"/>
    </location>
</feature>
<feature type="modified residue" description="4-hydroxyproline" evidence="3">
    <location>
        <position position="15"/>
    </location>
</feature>
<feature type="modified residue" description="4-hydroxyproline" evidence="3">
    <location>
        <position position="18"/>
    </location>
</feature>
<feature type="modified residue" description="4-hydroxyproline" evidence="3">
    <location>
        <position position="20"/>
    </location>
</feature>
<feature type="modified residue" description="4-hydroxyproline" evidence="3">
    <location>
        <position position="29"/>
    </location>
</feature>
<feature type="modified residue" description="4-hydroxyproline" evidence="3">
    <location>
        <position position="32"/>
    </location>
</feature>
<feature type="modified residue" description="4-hydroxyproline" evidence="3">
    <location>
        <position position="35"/>
    </location>
</feature>
<feature type="modified residue" description="4-hydroxyproline" evidence="3">
    <location>
        <position position="49"/>
    </location>
</feature>
<feature type="modified residue" description="4-hydroxyproline" evidence="3">
    <location>
        <position position="64"/>
    </location>
</feature>
<feature type="modified residue" description="4-hydroxyproline" evidence="3">
    <location>
        <position position="70"/>
    </location>
</feature>
<feature type="modified residue" description="4-hydroxyproline" evidence="3">
    <location>
        <position position="79"/>
    </location>
</feature>
<feature type="modified residue" description="4-hydroxyproline" evidence="3">
    <location>
        <position position="85"/>
    </location>
</feature>
<feature type="modified residue" description="5-hydroxylysine; alternate" evidence="1">
    <location>
        <position position="88"/>
    </location>
</feature>
<feature type="modified residue" description="Phosphoserine" evidence="2">
    <location>
        <position position="94"/>
    </location>
</feature>
<feature type="modified residue" description="4-hydroxyproline" evidence="3">
    <location>
        <position position="112"/>
    </location>
</feature>
<feature type="modified residue" description="4-hydroxyproline" evidence="3">
    <location>
        <position position="115"/>
    </location>
</feature>
<feature type="modified residue" description="4-hydroxyproline" evidence="3">
    <location>
        <position position="121"/>
    </location>
</feature>
<feature type="modified residue" description="4-hydroxyproline" evidence="3">
    <location>
        <position position="130"/>
    </location>
</feature>
<feature type="modified residue" description="4-hydroxyproline" evidence="3">
    <location>
        <position position="136"/>
    </location>
</feature>
<feature type="modified residue" description="4-hydroxyproline" evidence="3">
    <location>
        <position position="157"/>
    </location>
</feature>
<feature type="modified residue" description="4-hydroxyproline" evidence="3">
    <location>
        <position position="166"/>
    </location>
</feature>
<feature type="modified residue" description="4-hydroxyproline" evidence="3">
    <location>
        <position position="169"/>
    </location>
</feature>
<feature type="modified residue" description="4-hydroxyproline" evidence="3">
    <location>
        <position position="196"/>
    </location>
</feature>
<feature type="modified residue" description="4-hydroxyproline" evidence="3">
    <location>
        <position position="199"/>
    </location>
</feature>
<feature type="modified residue" description="4-hydroxyproline" evidence="3">
    <location>
        <position position="211"/>
    </location>
</feature>
<feature type="modified residue" description="4-hydroxyproline" evidence="3">
    <location>
        <position position="217"/>
    </location>
</feature>
<feature type="modified residue" description="4-hydroxyproline" evidence="3">
    <location>
        <position position="226"/>
    </location>
</feature>
<feature type="modified residue" description="4-hydroxyproline" evidence="3">
    <location>
        <position position="232"/>
    </location>
</feature>
<feature type="modified residue" description="4-hydroxyproline" evidence="3">
    <location>
        <position position="235"/>
    </location>
</feature>
<feature type="modified residue" description="4-hydroxyproline" evidence="3">
    <location>
        <position position="250"/>
    </location>
</feature>
<feature type="modified residue" description="5-hydroxylysine" evidence="3">
    <location>
        <position position="253"/>
    </location>
</feature>
<feature type="modified residue" description="4-hydroxyproline" evidence="3">
    <location>
        <position position="259"/>
    </location>
</feature>
<feature type="modified residue" description="4-hydroxyproline" evidence="3">
    <location>
        <position position="262"/>
    </location>
</feature>
<feature type="modified residue" description="4-hydroxyproline" evidence="3">
    <location>
        <position position="273"/>
    </location>
</feature>
<feature type="modified residue" description="4-hydroxyproline" evidence="3">
    <location>
        <position position="282"/>
    </location>
</feature>
<feature type="modified residue" description="4-hydroxyproline" evidence="3">
    <location>
        <position position="297"/>
    </location>
</feature>
<feature type="modified residue" description="4-hydroxyproline" evidence="3">
    <location>
        <position position="303"/>
    </location>
</feature>
<feature type="modified residue" description="4-hydroxyproline" evidence="3">
    <location>
        <position position="312"/>
    </location>
</feature>
<feature type="modified residue" description="4-hydroxyproline" evidence="3">
    <location>
        <position position="318"/>
    </location>
</feature>
<feature type="modified residue" description="5-hydroxylysine" evidence="3">
    <location>
        <position position="326"/>
    </location>
</feature>
<feature type="modified residue" description="4-hydroxyproline" evidence="3">
    <location>
        <position position="335"/>
    </location>
</feature>
<feature type="modified residue" description="4-hydroxyproline" evidence="3">
    <location>
        <position position="344"/>
    </location>
</feature>
<feature type="modified residue" description="4-hydroxyproline" evidence="3">
    <location>
        <position position="350"/>
    </location>
</feature>
<feature type="modified residue" description="4-hydroxyproline" evidence="3">
    <location>
        <position position="356"/>
    </location>
</feature>
<feature type="modified residue" description="4-hydroxyproline" evidence="3">
    <location>
        <position position="365"/>
    </location>
</feature>
<feature type="modified residue" description="4-hydroxyproline" evidence="3">
    <location>
        <position position="368"/>
    </location>
</feature>
<feature type="modified residue" description="4-hydroxyproline" evidence="3">
    <location>
        <position position="377"/>
    </location>
</feature>
<feature type="modified residue" description="4-hydroxyproline" evidence="3">
    <location>
        <position position="386"/>
    </location>
</feature>
<feature type="modified residue" description="4-hydroxyproline" evidence="3">
    <location>
        <position position="392"/>
    </location>
</feature>
<feature type="modified residue" description="4-hydroxyproline" evidence="3">
    <location>
        <position position="404"/>
    </location>
</feature>
<feature type="modified residue" description="4-hydroxyproline" evidence="3">
    <location>
        <position position="413"/>
    </location>
</feature>
<feature type="modified residue" description="4-hydroxyproline" evidence="3">
    <location>
        <position position="422"/>
    </location>
</feature>
<feature type="modified residue" description="4-hydroxyproline" evidence="3">
    <location>
        <position position="425"/>
    </location>
</feature>
<feature type="modified residue" description="4-hydroxyproline" evidence="3">
    <location>
        <position position="443"/>
    </location>
</feature>
<feature type="modified residue" description="4-hydroxyproline" evidence="3">
    <location>
        <position position="460"/>
    </location>
</feature>
<feature type="modified residue" description="4-hydroxyproline" evidence="3">
    <location>
        <position position="466"/>
    </location>
</feature>
<feature type="modified residue" description="4-hydroxyproline" evidence="3">
    <location>
        <position position="472"/>
    </location>
</feature>
<feature type="modified residue" description="4-hydroxyproline" evidence="3">
    <location>
        <position position="480"/>
    </location>
</feature>
<feature type="modified residue" description="4-hydroxyproline" evidence="3">
    <location>
        <position position="492"/>
    </location>
</feature>
<feature type="modified residue" description="4-hydroxyproline" evidence="3">
    <location>
        <position position="501"/>
    </location>
</feature>
<feature type="modified residue" description="4-hydroxyproline" evidence="3">
    <location>
        <position position="509"/>
    </location>
</feature>
<feature type="modified residue" description="4-hydroxyproline" evidence="3">
    <location>
        <position position="515"/>
    </location>
</feature>
<feature type="modified residue" description="4-hydroxyproline" evidence="3">
    <location>
        <position position="524"/>
    </location>
</feature>
<feature type="modified residue" description="5-hydroxylysine" evidence="3">
    <location>
        <position position="536"/>
    </location>
</feature>
<feature type="modified residue" description="4-hydroxyproline" evidence="3">
    <location>
        <position position="542"/>
    </location>
</feature>
<feature type="modified residue" description="4-hydroxyproline" evidence="3">
    <location>
        <position position="557"/>
    </location>
</feature>
<feature type="modified residue" description="4-hydroxyproline" evidence="3">
    <location>
        <position position="563"/>
    </location>
</feature>
<feature type="modified residue" description="Phosphoserine" evidence="2">
    <location>
        <position position="572"/>
    </location>
</feature>
<feature type="modified residue" description="4-hydroxyproline" evidence="3">
    <location>
        <position position="584"/>
    </location>
</feature>
<feature type="modified residue" description="4-hydroxyproline" evidence="3">
    <location>
        <position position="590"/>
    </location>
</feature>
<feature type="modified residue" description="4-hydroxyproline" evidence="3">
    <location>
        <position position="593"/>
    </location>
</feature>
<feature type="modified residue" description="4-hydroxyproline" evidence="3">
    <location>
        <position position="602"/>
    </location>
</feature>
<feature type="modified residue" description="4-hydroxyproline" evidence="3">
    <location>
        <position position="608"/>
    </location>
</feature>
<feature type="modified residue" description="4-hydroxyproline" evidence="3">
    <location>
        <position position="626"/>
    </location>
</feature>
<feature type="modified residue" description="4-hydroxyproline" evidence="3">
    <location>
        <position position="635"/>
    </location>
</feature>
<feature type="modified residue" description="4-hydroxyproline" evidence="3">
    <location>
        <position position="644"/>
    </location>
</feature>
<feature type="modified residue" description="5-hydroxylysine" evidence="3">
    <location>
        <position position="647"/>
    </location>
</feature>
<feature type="modified residue" description="4-hydroxyproline" evidence="3">
    <location>
        <position position="656"/>
    </location>
</feature>
<feature type="modified residue" description="4-hydroxyproline" evidence="3">
    <location>
        <position position="662"/>
    </location>
</feature>
<feature type="modified residue" description="3-hydroxyproline" evidence="4">
    <location>
        <position position="670"/>
    </location>
</feature>
<feature type="modified residue" description="4-hydroxyproline" evidence="4">
    <location>
        <position position="671"/>
    </location>
</feature>
<feature type="modified residue" description="4-hydroxyproline" evidence="4">
    <location>
        <position position="680"/>
    </location>
</feature>
<feature type="modified residue" description="4-hydroxyproline" evidence="4">
    <location>
        <position position="683"/>
    </location>
</feature>
<feature type="modified residue" description="4-hydroxyproline" evidence="3">
    <location>
        <position position="704"/>
    </location>
</feature>
<feature type="modified residue" description="4-hydroxyproline" evidence="3">
    <location>
        <position position="713"/>
    </location>
</feature>
<feature type="modified residue" description="4-hydroxyproline" evidence="3">
    <location>
        <position position="721"/>
    </location>
</feature>
<feature type="modified residue" description="4-hydroxyproline" evidence="3">
    <location>
        <position position="730"/>
    </location>
</feature>
<feature type="modified residue" description="4-hydroxyproline" evidence="3">
    <location>
        <position position="748"/>
    </location>
</feature>
<feature type="modified residue" description="4-hydroxyproline" evidence="3">
    <location>
        <position position="757"/>
    </location>
</feature>
<feature type="modified residue" description="4-hydroxyproline" evidence="3">
    <location>
        <position position="760"/>
    </location>
</feature>
<feature type="modified residue" description="4-hydroxyproline" evidence="3">
    <location>
        <position position="766"/>
    </location>
</feature>
<feature type="modified residue" description="4-hydroxyproline" evidence="3">
    <location>
        <position position="771"/>
    </location>
</feature>
<feature type="modified residue" description="4-hydroxyproline" evidence="3">
    <location>
        <position position="777"/>
    </location>
</feature>
<feature type="modified residue" description="4-hydroxyproline" evidence="3">
    <location>
        <position position="783"/>
    </location>
</feature>
<feature type="modified residue" description="4-hydroxyproline" evidence="3">
    <location>
        <position position="791"/>
    </location>
</feature>
<feature type="modified residue" description="4-hydroxyproline" evidence="3">
    <location>
        <position position="797"/>
    </location>
</feature>
<feature type="modified residue" description="5-hydroxylysine" evidence="3">
    <location>
        <position position="806"/>
    </location>
</feature>
<feature type="modified residue" description="4-hydroxyproline" evidence="3">
    <location>
        <position position="818"/>
    </location>
</feature>
<feature type="modified residue" description="4-hydroxyproline" evidence="3">
    <location>
        <position position="821"/>
    </location>
</feature>
<feature type="modified residue" description="4-hydroxyproline" evidence="3">
    <location>
        <position position="824"/>
    </location>
</feature>
<feature type="modified residue" description="5-hydroxylysine" evidence="3">
    <location>
        <position position="869"/>
    </location>
</feature>
<feature type="modified residue" description="5-hydroxylysine; alternate" evidence="3">
    <location>
        <position position="881"/>
    </location>
</feature>
<feature type="modified residue" description="4-hydroxyproline" evidence="3">
    <location>
        <position position="896"/>
    </location>
</feature>
<feature type="modified residue" description="4-hydroxyproline" evidence="3">
    <location>
        <position position="899"/>
    </location>
</feature>
<feature type="modified residue" description="4-hydroxyproline" evidence="3">
    <location>
        <position position="917"/>
    </location>
</feature>
<feature type="modified residue" description="4-hydroxyproline" evidence="4">
    <location>
        <position position="932"/>
    </location>
</feature>
<feature type="modified residue" description="3-hydroxyproline" evidence="4">
    <location>
        <position position="937"/>
    </location>
</feature>
<feature type="modified residue" description="4-hydroxyproline" evidence="4">
    <location>
        <position position="938"/>
    </location>
</feature>
<feature type="modified residue" description="3-hydroxyproline" evidence="4">
    <location>
        <position position="952"/>
    </location>
</feature>
<feature type="modified residue" description="4-hydroxyproline" evidence="4">
    <location>
        <position position="953"/>
    </location>
</feature>
<feature type="modified residue" description="3-hydroxyproline" evidence="4">
    <location>
        <position position="955"/>
    </location>
</feature>
<feature type="modified residue" description="4-hydroxyproline" evidence="4">
    <location>
        <position position="956"/>
    </location>
</feature>
<feature type="modified residue" description="3-hydroxyproline" evidence="4">
    <location>
        <position position="958"/>
    </location>
</feature>
<feature type="modified residue" description="4-hydroxyproline" evidence="4">
    <location>
        <position position="959"/>
    </location>
</feature>
<feature type="modified residue" description="4-hydroxyproline" evidence="4">
    <location>
        <position position="962"/>
    </location>
</feature>
<feature type="modified residue" description="4-hydroxyproline" evidence="4">
    <location>
        <position position="965"/>
    </location>
</feature>
<feature type="glycosylation site" description="O-linked (Gal...) hydroxylysine; alternate" evidence="1">
    <location>
        <position position="88"/>
    </location>
</feature>
<feature type="glycosylation site" description="O-linked (Gal...) hydroxylysine; alternate" evidence="3">
    <location>
        <position position="881"/>
    </location>
</feature>
<feature type="unsure residue" description="L or I" evidence="6">
    <location>
        <position position="14"/>
    </location>
</feature>
<feature type="unsure residue" description="L or I" evidence="6">
    <location>
        <position position="78"/>
    </location>
</feature>
<feature type="unsure residue" description="L or I" evidence="6">
    <location>
        <position position="84"/>
    </location>
</feature>
<feature type="unsure residue" description="L or I" evidence="6">
    <location>
        <position position="96"/>
    </location>
</feature>
<feature type="unsure residue" description="L or I" evidence="6">
    <location>
        <position position="129"/>
    </location>
</feature>
<feature type="unsure residue" description="I or L" evidence="6">
    <location>
        <position position="228"/>
    </location>
</feature>
<feature type="unsure residue" description="I or L" evidence="6">
    <location>
        <position position="278"/>
    </location>
</feature>
<feature type="unsure residue" description="L or I" evidence="6">
    <location>
        <position position="302"/>
    </location>
</feature>
<feature type="unsure residue" description="L or I" evidence="6">
    <location>
        <position position="355"/>
    </location>
</feature>
<feature type="unsure residue" description="L or I" evidence="6">
    <location>
        <position position="361"/>
    </location>
</feature>
<feature type="unsure residue" description="L or I" evidence="6">
    <location>
        <position position="465"/>
    </location>
</feature>
<feature type="unsure residue" description="L or I" evidence="6">
    <location>
        <position position="477"/>
    </location>
</feature>
<feature type="unsure residue" description="L or I" evidence="6">
    <location>
        <position position="511"/>
    </location>
</feature>
<feature type="unsure residue" description="L or I" evidence="6">
    <location>
        <position position="523"/>
    </location>
</feature>
<feature type="unsure residue" description="L or I" evidence="6">
    <location>
        <position position="550"/>
    </location>
</feature>
<feature type="unsure residue" description="I or L" evidence="6">
    <location>
        <position position="554"/>
    </location>
</feature>
<feature type="unsure residue" description="I or L" evidence="6">
    <location>
        <position position="638"/>
    </location>
</feature>
<feature type="unsure residue" description="I or L" evidence="6">
    <location>
        <position position="738"/>
    </location>
</feature>
<feature type="unsure residue" description="L or I" evidence="6">
    <location>
        <position position="747"/>
    </location>
</feature>
<feature type="unsure residue" description="L or I" evidence="6">
    <location>
        <position position="759"/>
    </location>
</feature>
<feature type="unsure residue" description="L or I" evidence="6">
    <location>
        <position position="779"/>
    </location>
</feature>
<feature type="unsure residue" description="I or L" evidence="6">
    <location>
        <position position="880"/>
    </location>
</feature>
<feature type="unsure residue" description="L or I" evidence="6">
    <location>
        <position position="889"/>
    </location>
</feature>
<feature type="unsure residue" description="L or I" evidence="6">
    <location>
        <position position="928"/>
    </location>
</feature>
<feature type="unsure residue" description="L or I" evidence="6">
    <location>
        <position position="931"/>
    </location>
</feature>
<feature type="unsure residue" description="I or L" evidence="6">
    <location>
        <position position="935"/>
    </location>
</feature>
<feature type="non-consecutive residues" evidence="7">
    <location>
        <begin position="19"/>
        <end position="20"/>
    </location>
</feature>
<feature type="non-consecutive residues" evidence="7">
    <location>
        <begin position="36"/>
        <end position="37"/>
    </location>
</feature>
<feature type="non-consecutive residues" evidence="7">
    <location>
        <begin position="263"/>
        <end position="264"/>
    </location>
</feature>
<feature type="non-consecutive residues" evidence="7">
    <location>
        <begin position="322"/>
        <end position="323"/>
    </location>
</feature>
<feature type="non-consecutive residues" evidence="7">
    <location>
        <begin position="459"/>
        <end position="460"/>
    </location>
</feature>
<feature type="non-consecutive residues" evidence="7">
    <location>
        <begin position="475"/>
        <end position="476"/>
    </location>
</feature>
<feature type="non-consecutive residues" evidence="7">
    <location>
        <begin position="508"/>
        <end position="509"/>
    </location>
</feature>
<feature type="non-consecutive residues" evidence="7">
    <location>
        <begin position="715"/>
        <end position="716"/>
    </location>
</feature>
<feature type="non-consecutive residues" evidence="7">
    <location>
        <begin position="768"/>
        <end position="769"/>
    </location>
</feature>
<feature type="non-consecutive residues" evidence="7">
    <location>
        <begin position="785"/>
        <end position="786"/>
    </location>
</feature>
<feature type="non-terminal residue" evidence="7">
    <location>
        <position position="1"/>
    </location>
</feature>
<feature type="non-terminal residue" evidence="7">
    <location>
        <position position="965"/>
    </location>
</feature>
<sequence>SVPGPMGPSGPRGLPGPPGPGPQGFQGPPGEPGEPGSGPMGPRGPPGPPGKNGDDGEAGKPGRPGERGPPGPQGARGLPGTAGLPGMKGHRGFSGLDGAKGDAGPAGPKGEPGSPGENGAPGQMGPRGLPGERGRPGASGPAGARGNDGATGAAGPPGPTGPAGPPGFPGAVGAKGEAGPQGARGSEGPQGVRGEPGPPGPAGAAGPAGNPGADGQPGAKGANGAPGIAGAPGFPGARGPSGPQGPSGPPGPKGNSGEPGAPGKGDTGAKGEPGPTGIQGPPGPAGEEGKRGARGEPGPTGLPGPPGERGGPGSRGFPGADGAGPKGPAGERGSPGPAGPKGSPGEAGRPGEAGLPGAKGLTGSPGSPGPDGKTGPPGPAGQDGRPGPPGPPGARGQAGVMGFPGPKGAAGEPGKAGERGVPGPPGAVGPAGKDGEAGAQGPPGPAGPAGERGEQGPAGPGFQGLPGPAGPPGEADLGAPGPSGARGERGFPGERGVQGPPGPAGPRGPGLQGMPGERGAAGLPGPKGDRGDAGPKGADGAPGKDGVRGLTGPIGPPGPAGAPGDKGESGPSGPAGPTGARGAPGDRGEPGPPGPAGFAGPPGADGQPGAKGEPGDAGAKGDAGPPGPAGPTGPPGPIGNVGAPGPKGARGSAGPPGATGFPGAAGRVGPPGPSGNAGPPGPPGPVGKEGGKGPRGETGPAGRPGEVGPPGPPGPGEKGSPGADGPAGAPGTPGPQGISGQRGVVGLPGQRGERGFPGLPGPSGEPGKGPPGPMGPPGLAGPPGEGREGSPGAEGSPGRDGSPGPKGDRGETGPSGPPGAPGAPGAPGPVGPAGKSGDRGETGPAGPAGPAGPAGARGPAGPQGPRGDKGETGEQGDRGIKGHRGFSGLQGPAGPPGSPGEQGPSGASGPAGPRGPPGSAGSPGKDGLNGLPGPIGPPGPRGRTGDAGPVGPPGPPGPPGPPGPP</sequence>
<evidence type="ECO:0000250" key="1">
    <source>
        <dbReference type="UniProtKB" id="P02452"/>
    </source>
</evidence>
<evidence type="ECO:0000250" key="2">
    <source>
        <dbReference type="UniProtKB" id="P02454"/>
    </source>
</evidence>
<evidence type="ECO:0000250" key="3">
    <source>
        <dbReference type="UniProtKB" id="P02457"/>
    </source>
</evidence>
<evidence type="ECO:0000250" key="4">
    <source>
        <dbReference type="UniProtKB" id="P11087"/>
    </source>
</evidence>
<evidence type="ECO:0000256" key="5">
    <source>
        <dbReference type="SAM" id="MobiDB-lite"/>
    </source>
</evidence>
<evidence type="ECO:0000269" key="6">
    <source>
    </source>
</evidence>
<evidence type="ECO:0000303" key="7">
    <source>
    </source>
</evidence>
<evidence type="ECO:0000305" key="8"/>
<comment type="function">
    <text evidence="8">Type I collagen is a member of group I collagen (fibrillar forming collagen).</text>
</comment>
<comment type="subunit">
    <text evidence="8">Trimers of one alpha 2(I) and two alpha 1(I) chains.</text>
</comment>
<comment type="subcellular location">
    <subcellularLocation>
        <location>Secreted</location>
    </subcellularLocation>
    <subcellularLocation>
        <location>Secreted</location>
        <location>Extracellular space</location>
    </subcellularLocation>
    <subcellularLocation>
        <location evidence="8">Secreted</location>
        <location evidence="8">Extracellular space</location>
        <location evidence="8">Extracellular matrix</location>
    </subcellularLocation>
</comment>
<comment type="tissue specificity">
    <text evidence="6">Expressed in bones.</text>
</comment>
<comment type="PTM">
    <text evidence="1">Contains mostly 4-hydroxyproline. Proline residues at the third position of the tripeptide repeating unit (G-X-Y) are hydroxylated in some or all of the chains.</text>
</comment>
<comment type="PTM">
    <text evidence="4">Contains 3-hydroxyproline at a few sites. This modification occurs on the first proline residue in the sequence motif Gly-Pro-Hyp, where Hyp is 4-hydroxyproline.</text>
</comment>
<comment type="PTM">
    <text evidence="1">Lysine residues at the third position of the tripeptide repeating unit (G-X-Y) are 5-hydroxylated in some or all of the chains.</text>
</comment>
<comment type="PTM">
    <text evidence="1">O-glycosylated on hydroxylated lysine residues. The O-linked glycan consists of a Glc-Gal disaccharide.</text>
</comment>
<comment type="miscellaneous">
    <text evidence="6">These protein fragments were extracted from an ancient phalanx bone collected at Arroyo Del Moro in Argentina.</text>
</comment>
<comment type="similarity">
    <text evidence="8">Belongs to the fibrillar collagen family.</text>
</comment>
<accession>C0HLI5</accession>